<keyword id="KW-0028">Amino-acid biosynthesis</keyword>
<keyword id="KW-0057">Aromatic amino acid biosynthesis</keyword>
<keyword id="KW-0456">Lyase</keyword>
<comment type="function">
    <text evidence="1">Catalyzes a trans-dehydration via an enolate intermediate.</text>
</comment>
<comment type="catalytic activity">
    <reaction evidence="1">
        <text>3-dehydroquinate = 3-dehydroshikimate + H2O</text>
        <dbReference type="Rhea" id="RHEA:21096"/>
        <dbReference type="ChEBI" id="CHEBI:15377"/>
        <dbReference type="ChEBI" id="CHEBI:16630"/>
        <dbReference type="ChEBI" id="CHEBI:32364"/>
        <dbReference type="EC" id="4.2.1.10"/>
    </reaction>
</comment>
<comment type="pathway">
    <text evidence="1">Metabolic intermediate biosynthesis; chorismate biosynthesis; chorismate from D-erythrose 4-phosphate and phosphoenolpyruvate: step 3/7.</text>
</comment>
<comment type="subunit">
    <text evidence="1">Homododecamer.</text>
</comment>
<comment type="similarity">
    <text evidence="1">Belongs to the type-II 3-dehydroquinase family.</text>
</comment>
<reference key="1">
    <citation type="journal article" date="2005" name="J. Bacteriol.">
        <title>Insights into genome plasticity and pathogenicity of the plant pathogenic Bacterium Xanthomonas campestris pv. vesicatoria revealed by the complete genome sequence.</title>
        <authorList>
            <person name="Thieme F."/>
            <person name="Koebnik R."/>
            <person name="Bekel T."/>
            <person name="Berger C."/>
            <person name="Boch J."/>
            <person name="Buettner D."/>
            <person name="Caldana C."/>
            <person name="Gaigalat L."/>
            <person name="Goesmann A."/>
            <person name="Kay S."/>
            <person name="Kirchner O."/>
            <person name="Lanz C."/>
            <person name="Linke B."/>
            <person name="McHardy A.C."/>
            <person name="Meyer F."/>
            <person name="Mittenhuber G."/>
            <person name="Nies D.H."/>
            <person name="Niesbach-Kloesgen U."/>
            <person name="Patschkowski T."/>
            <person name="Rueckert C."/>
            <person name="Rupp O."/>
            <person name="Schneiker S."/>
            <person name="Schuster S.C."/>
            <person name="Vorhoelter F.J."/>
            <person name="Weber E."/>
            <person name="Puehler A."/>
            <person name="Bonas U."/>
            <person name="Bartels D."/>
            <person name="Kaiser O."/>
        </authorList>
    </citation>
    <scope>NUCLEOTIDE SEQUENCE [LARGE SCALE GENOMIC DNA]</scope>
    <source>
        <strain>85-10</strain>
    </source>
</reference>
<proteinExistence type="inferred from homology"/>
<dbReference type="EC" id="4.2.1.10" evidence="1"/>
<dbReference type="EMBL" id="AM039952">
    <property type="protein sequence ID" value="CAJ22197.1"/>
    <property type="molecule type" value="Genomic_DNA"/>
</dbReference>
<dbReference type="RefSeq" id="WP_003483185.1">
    <property type="nucleotide sequence ID" value="NZ_CP017190.1"/>
</dbReference>
<dbReference type="SMR" id="Q3BY66"/>
<dbReference type="STRING" id="456327.BJD11_20020"/>
<dbReference type="GeneID" id="93989765"/>
<dbReference type="KEGG" id="xcv:XCV0566"/>
<dbReference type="eggNOG" id="COG0757">
    <property type="taxonomic scope" value="Bacteria"/>
</dbReference>
<dbReference type="HOGENOM" id="CLU_090968_1_0_6"/>
<dbReference type="UniPathway" id="UPA00053">
    <property type="reaction ID" value="UER00086"/>
</dbReference>
<dbReference type="Proteomes" id="UP000007069">
    <property type="component" value="Chromosome"/>
</dbReference>
<dbReference type="GO" id="GO:0003855">
    <property type="term" value="F:3-dehydroquinate dehydratase activity"/>
    <property type="evidence" value="ECO:0007669"/>
    <property type="project" value="UniProtKB-UniRule"/>
</dbReference>
<dbReference type="GO" id="GO:0008652">
    <property type="term" value="P:amino acid biosynthetic process"/>
    <property type="evidence" value="ECO:0007669"/>
    <property type="project" value="UniProtKB-KW"/>
</dbReference>
<dbReference type="GO" id="GO:0009073">
    <property type="term" value="P:aromatic amino acid family biosynthetic process"/>
    <property type="evidence" value="ECO:0007669"/>
    <property type="project" value="UniProtKB-KW"/>
</dbReference>
<dbReference type="GO" id="GO:0009423">
    <property type="term" value="P:chorismate biosynthetic process"/>
    <property type="evidence" value="ECO:0007669"/>
    <property type="project" value="UniProtKB-UniRule"/>
</dbReference>
<dbReference type="GO" id="GO:0019631">
    <property type="term" value="P:quinate catabolic process"/>
    <property type="evidence" value="ECO:0007669"/>
    <property type="project" value="TreeGrafter"/>
</dbReference>
<dbReference type="CDD" id="cd00466">
    <property type="entry name" value="DHQase_II"/>
    <property type="match status" value="1"/>
</dbReference>
<dbReference type="Gene3D" id="3.40.50.9100">
    <property type="entry name" value="Dehydroquinase, class II"/>
    <property type="match status" value="1"/>
</dbReference>
<dbReference type="HAMAP" id="MF_00169">
    <property type="entry name" value="AroQ"/>
    <property type="match status" value="1"/>
</dbReference>
<dbReference type="InterPro" id="IPR001874">
    <property type="entry name" value="DHquinase_II"/>
</dbReference>
<dbReference type="InterPro" id="IPR018509">
    <property type="entry name" value="DHquinase_II_CS"/>
</dbReference>
<dbReference type="InterPro" id="IPR036441">
    <property type="entry name" value="DHquinase_II_sf"/>
</dbReference>
<dbReference type="NCBIfam" id="TIGR01088">
    <property type="entry name" value="aroQ"/>
    <property type="match status" value="1"/>
</dbReference>
<dbReference type="NCBIfam" id="NF003804">
    <property type="entry name" value="PRK05395.1-1"/>
    <property type="match status" value="1"/>
</dbReference>
<dbReference type="NCBIfam" id="NF003805">
    <property type="entry name" value="PRK05395.1-2"/>
    <property type="match status" value="1"/>
</dbReference>
<dbReference type="NCBIfam" id="NF003806">
    <property type="entry name" value="PRK05395.1-3"/>
    <property type="match status" value="1"/>
</dbReference>
<dbReference type="NCBIfam" id="NF003807">
    <property type="entry name" value="PRK05395.1-4"/>
    <property type="match status" value="1"/>
</dbReference>
<dbReference type="PANTHER" id="PTHR21272">
    <property type="entry name" value="CATABOLIC 3-DEHYDROQUINASE"/>
    <property type="match status" value="1"/>
</dbReference>
<dbReference type="PANTHER" id="PTHR21272:SF3">
    <property type="entry name" value="CATABOLIC 3-DEHYDROQUINASE"/>
    <property type="match status" value="1"/>
</dbReference>
<dbReference type="Pfam" id="PF01220">
    <property type="entry name" value="DHquinase_II"/>
    <property type="match status" value="1"/>
</dbReference>
<dbReference type="PIRSF" id="PIRSF001399">
    <property type="entry name" value="DHquinase_II"/>
    <property type="match status" value="1"/>
</dbReference>
<dbReference type="SUPFAM" id="SSF52304">
    <property type="entry name" value="Type II 3-dehydroquinate dehydratase"/>
    <property type="match status" value="1"/>
</dbReference>
<dbReference type="PROSITE" id="PS01029">
    <property type="entry name" value="DEHYDROQUINASE_II"/>
    <property type="match status" value="1"/>
</dbReference>
<gene>
    <name evidence="1" type="primary">aroQ</name>
    <name type="ordered locus">XCV0566</name>
</gene>
<protein>
    <recommendedName>
        <fullName evidence="1">3-dehydroquinate dehydratase</fullName>
        <shortName evidence="1">3-dehydroquinase</shortName>
        <ecNumber evidence="1">4.2.1.10</ecNumber>
    </recommendedName>
    <alternativeName>
        <fullName evidence="1">Type II DHQase</fullName>
    </alternativeName>
</protein>
<organism>
    <name type="scientific">Xanthomonas euvesicatoria pv. vesicatoria (strain 85-10)</name>
    <name type="common">Xanthomonas campestris pv. vesicatoria</name>
    <dbReference type="NCBI Taxonomy" id="316273"/>
    <lineage>
        <taxon>Bacteria</taxon>
        <taxon>Pseudomonadati</taxon>
        <taxon>Pseudomonadota</taxon>
        <taxon>Gammaproteobacteria</taxon>
        <taxon>Lysobacterales</taxon>
        <taxon>Lysobacteraceae</taxon>
        <taxon>Xanthomonas</taxon>
    </lineage>
</organism>
<name>AROQ_XANE5</name>
<sequence length="148" mass="16108">MAHLLLLHGPNLNLLGTREPEVYGRTTLAQIDAALVDRAQAAGHVLHCLQSNAEHVLVERIHAAREDGTAYILINPAAFTHTSVALRDALLGVGLPFVEIHLSNPHAREPFRHHSYLSDKADGVICGFGADSYRLALEAVIARLERDA</sequence>
<evidence type="ECO:0000255" key="1">
    <source>
        <dbReference type="HAMAP-Rule" id="MF_00169"/>
    </source>
</evidence>
<accession>Q3BY66</accession>
<feature type="chain" id="PRO_1000023531" description="3-dehydroquinate dehydratase">
    <location>
        <begin position="1"/>
        <end position="148"/>
    </location>
</feature>
<feature type="active site" description="Proton acceptor" evidence="1">
    <location>
        <position position="23"/>
    </location>
</feature>
<feature type="active site" description="Proton donor" evidence="1">
    <location>
        <position position="101"/>
    </location>
</feature>
<feature type="binding site" evidence="1">
    <location>
        <position position="75"/>
    </location>
    <ligand>
        <name>substrate</name>
    </ligand>
</feature>
<feature type="binding site" evidence="1">
    <location>
        <position position="81"/>
    </location>
    <ligand>
        <name>substrate</name>
    </ligand>
</feature>
<feature type="binding site" evidence="1">
    <location>
        <position position="88"/>
    </location>
    <ligand>
        <name>substrate</name>
    </ligand>
</feature>
<feature type="binding site" evidence="1">
    <location>
        <begin position="102"/>
        <end position="103"/>
    </location>
    <ligand>
        <name>substrate</name>
    </ligand>
</feature>
<feature type="binding site" evidence="1">
    <location>
        <position position="112"/>
    </location>
    <ligand>
        <name>substrate</name>
    </ligand>
</feature>
<feature type="site" description="Transition state stabilizer" evidence="1">
    <location>
        <position position="18"/>
    </location>
</feature>